<comment type="function">
    <text evidence="1">One of the primary rRNA binding proteins, it binds directly to 16S rRNA where it nucleates assembly of the head domain of the 30S subunit. Is located at the subunit interface close to the decoding center.</text>
</comment>
<comment type="subunit">
    <text evidence="1">Part of the 30S ribosomal subunit.</text>
</comment>
<comment type="similarity">
    <text evidence="1">Belongs to the universal ribosomal protein uS7 family.</text>
</comment>
<organism>
    <name type="scientific">Methanopyrus kandleri (strain AV19 / DSM 6324 / JCM 9639 / NBRC 100938)</name>
    <dbReference type="NCBI Taxonomy" id="190192"/>
    <lineage>
        <taxon>Archaea</taxon>
        <taxon>Methanobacteriati</taxon>
        <taxon>Methanobacteriota</taxon>
        <taxon>Methanomada group</taxon>
        <taxon>Methanopyri</taxon>
        <taxon>Methanopyrales</taxon>
        <taxon>Methanopyraceae</taxon>
        <taxon>Methanopyrus</taxon>
    </lineage>
</organism>
<feature type="chain" id="PRO_0000124400" description="Small ribosomal subunit protein uS7">
    <location>
        <begin position="1"/>
        <end position="197"/>
    </location>
</feature>
<protein>
    <recommendedName>
        <fullName evidence="1">Small ribosomal subunit protein uS7</fullName>
    </recommendedName>
    <alternativeName>
        <fullName evidence="2">30S ribosomal protein S7</fullName>
    </alternativeName>
</protein>
<dbReference type="EMBL" id="AE009439">
    <property type="protein sequence ID" value="AAM01895.1"/>
    <property type="molecule type" value="Genomic_DNA"/>
</dbReference>
<dbReference type="SMR" id="Q8TXJ3"/>
<dbReference type="FunCoup" id="Q8TXJ3">
    <property type="interactions" value="165"/>
</dbReference>
<dbReference type="STRING" id="190192.MK0680"/>
<dbReference type="PaxDb" id="190192-MK0680"/>
<dbReference type="EnsemblBacteria" id="AAM01895">
    <property type="protein sequence ID" value="AAM01895"/>
    <property type="gene ID" value="MK0680"/>
</dbReference>
<dbReference type="KEGG" id="mka:MK0680"/>
<dbReference type="PATRIC" id="fig|190192.8.peg.719"/>
<dbReference type="HOGENOM" id="CLU_063975_0_0_2"/>
<dbReference type="InParanoid" id="Q8TXJ3"/>
<dbReference type="Proteomes" id="UP000001826">
    <property type="component" value="Chromosome"/>
</dbReference>
<dbReference type="GO" id="GO:0015935">
    <property type="term" value="C:small ribosomal subunit"/>
    <property type="evidence" value="ECO:0007669"/>
    <property type="project" value="InterPro"/>
</dbReference>
<dbReference type="GO" id="GO:0019843">
    <property type="term" value="F:rRNA binding"/>
    <property type="evidence" value="ECO:0007669"/>
    <property type="project" value="UniProtKB-UniRule"/>
</dbReference>
<dbReference type="GO" id="GO:0003735">
    <property type="term" value="F:structural constituent of ribosome"/>
    <property type="evidence" value="ECO:0007669"/>
    <property type="project" value="InterPro"/>
</dbReference>
<dbReference type="GO" id="GO:0006412">
    <property type="term" value="P:translation"/>
    <property type="evidence" value="ECO:0007669"/>
    <property type="project" value="UniProtKB-UniRule"/>
</dbReference>
<dbReference type="CDD" id="cd14867">
    <property type="entry name" value="uS7_Eukaryote"/>
    <property type="match status" value="1"/>
</dbReference>
<dbReference type="Gene3D" id="1.10.455.10">
    <property type="entry name" value="Ribosomal protein S7 domain"/>
    <property type="match status" value="1"/>
</dbReference>
<dbReference type="HAMAP" id="MF_00480_A">
    <property type="entry name" value="Ribosomal_uS7_A"/>
    <property type="match status" value="1"/>
</dbReference>
<dbReference type="InterPro" id="IPR000235">
    <property type="entry name" value="Ribosomal_uS7"/>
</dbReference>
<dbReference type="InterPro" id="IPR026018">
    <property type="entry name" value="Ribosomal_uS7_arc"/>
</dbReference>
<dbReference type="InterPro" id="IPR020606">
    <property type="entry name" value="Ribosomal_uS7_CS"/>
</dbReference>
<dbReference type="InterPro" id="IPR023798">
    <property type="entry name" value="Ribosomal_uS7_dom"/>
</dbReference>
<dbReference type="InterPro" id="IPR036823">
    <property type="entry name" value="Ribosomal_uS7_dom_sf"/>
</dbReference>
<dbReference type="InterPro" id="IPR005716">
    <property type="entry name" value="Ribosomal_uS7_euk/arc"/>
</dbReference>
<dbReference type="NCBIfam" id="NF003106">
    <property type="entry name" value="PRK04027.1"/>
    <property type="match status" value="1"/>
</dbReference>
<dbReference type="NCBIfam" id="TIGR01028">
    <property type="entry name" value="uS7_euk_arch"/>
    <property type="match status" value="1"/>
</dbReference>
<dbReference type="PANTHER" id="PTHR11205">
    <property type="entry name" value="RIBOSOMAL PROTEIN S7"/>
    <property type="match status" value="1"/>
</dbReference>
<dbReference type="Pfam" id="PF00177">
    <property type="entry name" value="Ribosomal_S7"/>
    <property type="match status" value="1"/>
</dbReference>
<dbReference type="PIRSF" id="PIRSF002122">
    <property type="entry name" value="RPS7p_RPS7a_RPS5e_RPS7o"/>
    <property type="match status" value="1"/>
</dbReference>
<dbReference type="SUPFAM" id="SSF47973">
    <property type="entry name" value="Ribosomal protein S7"/>
    <property type="match status" value="1"/>
</dbReference>
<dbReference type="PROSITE" id="PS00052">
    <property type="entry name" value="RIBOSOMAL_S7"/>
    <property type="match status" value="1"/>
</dbReference>
<sequence>MEGNPYLDRLYEMKVFGKWDPTEVEVRDPGLKDYICLKPMYLPHTGGRHAKKRFAKAEVPIVERLINRVMRTEKNTGKKHLAYNIVKRAFDIIHERTGENPIQVLVQALENAAPREETTTIIYGGISYHEAVDSSPQRRLDIALRLITEGAQQRAFRNPKPIEECLAEEIIAAARYDTECHSIRRKEEIERIAEAAR</sequence>
<keyword id="KW-1185">Reference proteome</keyword>
<keyword id="KW-0687">Ribonucleoprotein</keyword>
<keyword id="KW-0689">Ribosomal protein</keyword>
<keyword id="KW-0694">RNA-binding</keyword>
<keyword id="KW-0699">rRNA-binding</keyword>
<accession>Q8TXJ3</accession>
<gene>
    <name evidence="1" type="primary">rps7</name>
    <name type="ordered locus">MK0680</name>
</gene>
<proteinExistence type="inferred from homology"/>
<evidence type="ECO:0000255" key="1">
    <source>
        <dbReference type="HAMAP-Rule" id="MF_00480"/>
    </source>
</evidence>
<evidence type="ECO:0000305" key="2"/>
<name>RS7_METKA</name>
<reference key="1">
    <citation type="journal article" date="2002" name="Proc. Natl. Acad. Sci. U.S.A.">
        <title>The complete genome of hyperthermophile Methanopyrus kandleri AV19 and monophyly of archaeal methanogens.</title>
        <authorList>
            <person name="Slesarev A.I."/>
            <person name="Mezhevaya K.V."/>
            <person name="Makarova K.S."/>
            <person name="Polushin N.N."/>
            <person name="Shcherbinina O.V."/>
            <person name="Shakhova V.V."/>
            <person name="Belova G.I."/>
            <person name="Aravind L."/>
            <person name="Natale D.A."/>
            <person name="Rogozin I.B."/>
            <person name="Tatusov R.L."/>
            <person name="Wolf Y.I."/>
            <person name="Stetter K.O."/>
            <person name="Malykh A.G."/>
            <person name="Koonin E.V."/>
            <person name="Kozyavkin S.A."/>
        </authorList>
    </citation>
    <scope>NUCLEOTIDE SEQUENCE [LARGE SCALE GENOMIC DNA]</scope>
    <source>
        <strain>AV19 / DSM 6324 / JCM 9639 / NBRC 100938</strain>
    </source>
</reference>